<comment type="function">
    <text evidence="2 3 9 10 12 13 14 15">Calcium-activated, phospholipid- and diacylglycerol (DAG)-dependent serine/threonine-protein kinase that plays diverse roles in neuronal cells and eye tissues, such as regulation of the neuronal receptors GRIA4/GLUR4 and GRIN1/NMDAR1, modulation of receptors and neuronal functions related to sensitivity to opiates, pain and alcohol, mediation of synaptic function and cell survival after ischemia, and inhibition of gap junction activity after oxidative stress. Binds and phosphorylates GRIA4/GLUR4 glutamate receptor and regulates its function by increasing plasma membrane-associated GRIA4 expression. In primary cerebellar neurons treated with the agonist 3,5-dihyidroxyphenylglycine, functions downstream of the metabotropic glutamate receptor GRM5/MGLUR5 and phosphorylates GRIN1/NMDAR1 receptor which plays a key role in synaptic plasticity, synaptogenesis, excitotoxicity, memory acquisition and learning. May be involved in the regulation of hippocampal long-term potentiation (LTP), but may be not necessary for the process of synaptic plasticity. May be involved in desensitization of mu-type opioid receptor-mediated G-protein activation in the spinal cord, and may be critical for the development and/or maintenance of morphine-induced reinforcing effects in the limbic forebrain. May modulate the functionality of mu-type-opioid receptors by participating in a signaling pathway which leads to the phosphorylation and degradation of opioid receptors. May also contributes to chronic morphine-induced changes in nociceptive processing. Plays a role in neuropathic pain mechanisms and contributes to the maintenance of the allodynia pain produced by peripheral inflammation. Plays an important role in initial sensitivity and tolerance to ethanol, by mediating the behavioral effects of ethanol as well as the effects of this drug on the GABA(A) receptors. During and after cerebral ischemia modulate neurotransmission and cell survival in synaptic membranes, and is involved in insulin-induced inhibition of necrosis, an important mechanism for minimizing ischemic injury. Required for the elimination of multiple climbing fibers during innervation of Purkinje cells in developing cerebellum. Is activated in lens epithelial cells upon hydrogen peroxide treatment, and phosphorylates connexin-43 (GJA1/CX43), resulting in disassembly of GJA1 gap junction plaques and inhibition of gap junction activity which could provide a protective effect against oxidative stress. Phosphorylates p53/TP53 and promotes p53/TP53-dependent apoptosis in response to DNA damage. Involved in the phase resetting of the cerebral cortex circadian clock during temporally restricted feeding. Stabilizes the core clock component BMAL1 by interfering with its ubiquitination, thus suppressing its degradation, resulting in phase resetting of the cerebral cortex clock (By similarity). Phosphorylates and activates LRRK1, which phosphorylates RAB proteins involved in intracellular trafficking (By similarity).</text>
</comment>
<comment type="catalytic activity">
    <reaction evidence="2">
        <text>L-seryl-[protein] + ATP = O-phospho-L-seryl-[protein] + ADP + H(+)</text>
        <dbReference type="Rhea" id="RHEA:17989"/>
        <dbReference type="Rhea" id="RHEA-COMP:9863"/>
        <dbReference type="Rhea" id="RHEA-COMP:11604"/>
        <dbReference type="ChEBI" id="CHEBI:15378"/>
        <dbReference type="ChEBI" id="CHEBI:29999"/>
        <dbReference type="ChEBI" id="CHEBI:30616"/>
        <dbReference type="ChEBI" id="CHEBI:83421"/>
        <dbReference type="ChEBI" id="CHEBI:456216"/>
        <dbReference type="EC" id="2.7.11.13"/>
    </reaction>
</comment>
<comment type="catalytic activity">
    <reaction evidence="2">
        <text>L-threonyl-[protein] + ATP = O-phospho-L-threonyl-[protein] + ADP + H(+)</text>
        <dbReference type="Rhea" id="RHEA:46608"/>
        <dbReference type="Rhea" id="RHEA-COMP:11060"/>
        <dbReference type="Rhea" id="RHEA-COMP:11605"/>
        <dbReference type="ChEBI" id="CHEBI:15378"/>
        <dbReference type="ChEBI" id="CHEBI:30013"/>
        <dbReference type="ChEBI" id="CHEBI:30616"/>
        <dbReference type="ChEBI" id="CHEBI:61977"/>
        <dbReference type="ChEBI" id="CHEBI:456216"/>
        <dbReference type="EC" id="2.7.11.13"/>
    </reaction>
</comment>
<comment type="cofactor">
    <cofactor evidence="4">
        <name>Ca(2+)</name>
        <dbReference type="ChEBI" id="CHEBI:29108"/>
    </cofactor>
    <text evidence="2">Binds 3 Ca(2+) ions per subunit. The ions are bound to the C2 domain.</text>
</comment>
<comment type="activity regulation">
    <text>Classical (or conventional) PKCs (PRKCA, PRKCB and PRKCG) are activated by calcium and diacylglycerol (DAG) in the presence of phosphatidylserine. Three specific sites; Thr-514 (activation loop of the kinase domain), Thr-655 (turn motif) and Thr-674 (hydrophobic region), need to be phosphorylated for its full activation.</text>
</comment>
<comment type="subunit">
    <text evidence="2 3 10">Interacts with GRIA4. Interacts with CDCP1, TP53INP1 and p53/TP53 (By similarity). Interacts with BMAL1 (By similarity).</text>
</comment>
<comment type="interaction">
    <interactant intactId="EBI-12598030">
        <id>P63319</id>
    </interactant>
    <interactant intactId="EBI-444403">
        <id>P53667</id>
        <label>LIMK1</label>
    </interactant>
    <organismsDiffer>true</organismsDiffer>
    <experiments>3</experiments>
</comment>
<comment type="subcellular location">
    <subcellularLocation>
        <location evidence="3">Cytoplasm</location>
    </subcellularLocation>
    <subcellularLocation>
        <location>Cytoplasm</location>
        <location>Perinuclear region</location>
    </subcellularLocation>
    <subcellularLocation>
        <location evidence="10 11">Cell membrane</location>
        <topology>Peripheral membrane protein</topology>
    </subcellularLocation>
    <subcellularLocation>
        <location evidence="11">Synapse</location>
        <location evidence="11">Synaptosome</location>
    </subcellularLocation>
    <subcellularLocation>
        <location evidence="9">Cell projection</location>
        <location evidence="9">Dendrite</location>
    </subcellularLocation>
    <text evidence="11">Translocates to synaptic membranes on stimulation.</text>
</comment>
<comment type="PTM">
    <text evidence="3">Autophosphorylation on Thr-674 appears to regulate motor functions of junctophilins, JPH3 and JPH4.</text>
</comment>
<comment type="PTM">
    <text evidence="2">Ubiquitinated.</text>
</comment>
<comment type="similarity">
    <text evidence="16">Belongs to the protein kinase superfamily. AGC Ser/Thr protein kinase family. PKC subfamily.</text>
</comment>
<reference key="1">
    <citation type="journal article" date="1988" name="Nucleic Acids Res.">
        <title>Nucleotide sequences of cDNAs for alpha and gamma subspecies of rat brain protein kinase C.</title>
        <authorList>
            <person name="Ono Y."/>
            <person name="Fujii T."/>
            <person name="Igarashi K."/>
            <person name="Kikkawa U."/>
            <person name="Ogita K."/>
            <person name="Nishizuka Y."/>
        </authorList>
    </citation>
    <scope>NUCLEOTIDE SEQUENCE [MRNA]</scope>
    <source>
        <tissue>Brain</tissue>
    </source>
</reference>
<reference key="2">
    <citation type="journal article" date="1986" name="Cell">
        <title>Cloning and expression of multiple protein kinase C cDNAs.</title>
        <authorList>
            <person name="Knopf J.L."/>
            <person name="Lee M.-H."/>
            <person name="Sultzman L.A."/>
            <person name="Kriz R.W."/>
            <person name="Loomis C.R."/>
            <person name="Hewick R.M."/>
            <person name="Bell R.M."/>
        </authorList>
    </citation>
    <scope>NUCLEOTIDE SEQUENCE [MRNA]</scope>
</reference>
<reference key="3">
    <citation type="journal article" date="2004" name="Genome Res.">
        <title>The status, quality, and expansion of the NIH full-length cDNA project: the Mammalian Gene Collection (MGC).</title>
        <authorList>
            <consortium name="The MGC Project Team"/>
        </authorList>
    </citation>
    <scope>NUCLEOTIDE SEQUENCE [LARGE SCALE MRNA]</scope>
    <source>
        <tissue>Brain</tissue>
    </source>
</reference>
<reference key="4">
    <citation type="journal article" date="1990" name="J. Biol. Chem.">
        <title>Characterization of the 5'-flanking region of the rat protein kinase C gamma gene.</title>
        <authorList>
            <person name="Chen K.H."/>
            <person name="Widen S.G."/>
            <person name="Wilson S.H."/>
            <person name="Huang K.P."/>
        </authorList>
    </citation>
    <scope>NUCLEOTIDE SEQUENCE [GENOMIC DNA] OF 1-56</scope>
</reference>
<reference key="5">
    <citation type="journal article" date="1997" name="Hippocampus">
        <title>Exposure to chronic psychosocial stress and corticosterone in the rat: effects on spatial discrimination learning and hippocampal protein kinase Cgamma immunoreactivity.</title>
        <authorList>
            <person name="Krugers H.J."/>
            <person name="Douma B.R."/>
            <person name="Andringa G."/>
            <person name="Bohus B."/>
            <person name="Korf J."/>
            <person name="Luiten P.G."/>
        </authorList>
    </citation>
    <scope>FUNCTION</scope>
</reference>
<reference key="6">
    <citation type="journal article" date="1999" name="Neuroscience">
        <title>Inflammation-induced up-regulation of protein kinase Cgamma immunoreactivity in rat spinal cord correlates with enhanced nociceptive processing.</title>
        <authorList>
            <person name="Martin W.J."/>
            <person name="Liu H."/>
            <person name="Wang H."/>
            <person name="Malmberg A.B."/>
            <person name="Basbaum A.I."/>
        </authorList>
    </citation>
    <scope>FUNCTION IN INFLAMMATORY PAIN</scope>
    <scope>SUBCELLULAR LOCATION</scope>
</reference>
<reference key="7">
    <citation type="journal article" date="2003" name="J. Biol. Chem.">
        <title>Protein kinase C gamma associates directly with the GluR4 alpha-amino-3-hydroxy-5-methyl-4-isoxazole propionate receptor subunit. Effect on receptor phosphorylation.</title>
        <authorList>
            <person name="Correia S.S."/>
            <person name="Duarte C.B."/>
            <person name="Faro C.J."/>
            <person name="Pires E.V."/>
            <person name="Carvalho A.L."/>
        </authorList>
    </citation>
    <scope>FUNCTION IN PHOSPHORYLATION OF GRIA4/GLUR4</scope>
    <scope>INTERACTION WITH GRIA4/GLUR4</scope>
    <scope>SUBCELLULAR LOCATION</scope>
</reference>
<reference key="8">
    <citation type="journal article" date="2004" name="J. Cereb. Blood Flow Metab.">
        <title>Protein kinase C-gamma and calcium/calmodulin-dependent protein kinase II-alpha are persistently translocated to cell membranes of the rat brain during and after middle cerebral artery occlusion.</title>
        <authorList>
            <person name="Matsumoto S."/>
            <person name="Shamloo M."/>
            <person name="Matsumoto E."/>
            <person name="Isshiki A."/>
            <person name="Wieloch T."/>
        </authorList>
    </citation>
    <scope>SUBCELLULAR LOCATION</scope>
</reference>
<reference key="9">
    <citation type="journal article" date="2005" name="Neurochem. Int.">
        <title>Serines 890 and 896 of the NMDA receptor subunit NR1 are differentially phosphorylated by protein kinase C isoforms.</title>
        <authorList>
            <person name="Sanchez-Perez A.M."/>
            <person name="Felipo V."/>
        </authorList>
    </citation>
    <scope>FUNCTION IN PHOSPHORYLATION OF GRIN1/NMDAR1</scope>
</reference>
<reference key="10">
    <citation type="journal article" date="2005" name="J. Pharmacol. Exp. Ther.">
        <title>Insulin receptor-protein kinase C-gamma signaling mediates inhibition of hypoxia-induced necrosis of cortical neurons.</title>
        <authorList>
            <person name="Hamabe W."/>
            <person name="Fujita R."/>
            <person name="Ueda H."/>
        </authorList>
    </citation>
    <scope>FUNCTION IN CELL SURVIVAL</scope>
</reference>
<reference key="11">
    <citation type="journal article" date="2012" name="Nat. Commun.">
        <title>Quantitative maps of protein phosphorylation sites across 14 different rat organs and tissues.</title>
        <authorList>
            <person name="Lundby A."/>
            <person name="Secher A."/>
            <person name="Lage K."/>
            <person name="Nordsborg N.B."/>
            <person name="Dmytriyev A."/>
            <person name="Lundby C."/>
            <person name="Olsen J.V."/>
        </authorList>
    </citation>
    <scope>PHOSPHORYLATION [LARGE SCALE ANALYSIS] AT SER-326; SER-328; SER-330; THR-655 AND SER-687</scope>
    <scope>IDENTIFICATION BY MASS SPECTROMETRY [LARGE SCALE ANALYSIS]</scope>
</reference>
<reference key="12">
    <citation type="journal article" date="1997" name="Biochemistry">
        <title>NMR structure of a protein kinase C-gamma phorbol-binding domain and study of protein-lipid micelle interactions.</title>
        <authorList>
            <person name="Xu R.X."/>
            <person name="Pawelczyk T."/>
            <person name="Xia T.-H."/>
            <person name="Brown S.C."/>
        </authorList>
    </citation>
    <scope>STRUCTURE BY NMR OF 91-172 IN COMPLEX WITH PHORBOL-12,13-DIBUTYRATE</scope>
    <scope>FUNCTION</scope>
</reference>
<feature type="chain" id="PRO_0000055692" description="Protein kinase C gamma type">
    <location>
        <begin position="1"/>
        <end position="697"/>
    </location>
</feature>
<feature type="domain" description="C2" evidence="4">
    <location>
        <begin position="157"/>
        <end position="275"/>
    </location>
</feature>
<feature type="domain" description="Protein kinase" evidence="5">
    <location>
        <begin position="351"/>
        <end position="614"/>
    </location>
</feature>
<feature type="domain" description="AGC-kinase C-terminal" evidence="7">
    <location>
        <begin position="615"/>
        <end position="685"/>
    </location>
</feature>
<feature type="zinc finger region" description="Phorbol-ester/DAG-type 1" evidence="6">
    <location>
        <begin position="35"/>
        <end position="85"/>
    </location>
</feature>
<feature type="zinc finger region" description="Phorbol-ester/DAG-type 2" evidence="6">
    <location>
        <begin position="100"/>
        <end position="150"/>
    </location>
</feature>
<feature type="active site" description="Proton acceptor" evidence="5 8">
    <location>
        <position position="480"/>
    </location>
</feature>
<feature type="binding site" evidence="3">
    <location>
        <position position="186"/>
    </location>
    <ligand>
        <name>Ca(2+)</name>
        <dbReference type="ChEBI" id="CHEBI:29108"/>
        <label>1</label>
    </ligand>
</feature>
<feature type="binding site" evidence="2">
    <location>
        <position position="187"/>
    </location>
    <ligand>
        <name>Ca(2+)</name>
        <dbReference type="ChEBI" id="CHEBI:29108"/>
        <label>1</label>
    </ligand>
</feature>
<feature type="binding site" evidence="2">
    <location>
        <position position="187"/>
    </location>
    <ligand>
        <name>Ca(2+)</name>
        <dbReference type="ChEBI" id="CHEBI:29108"/>
        <label>2</label>
    </ligand>
</feature>
<feature type="binding site" evidence="2">
    <location>
        <position position="193"/>
    </location>
    <ligand>
        <name>Ca(2+)</name>
        <dbReference type="ChEBI" id="CHEBI:29108"/>
        <label>2</label>
    </ligand>
</feature>
<feature type="binding site" evidence="2">
    <location>
        <position position="246"/>
    </location>
    <ligand>
        <name>Ca(2+)</name>
        <dbReference type="ChEBI" id="CHEBI:29108"/>
        <label>1</label>
    </ligand>
</feature>
<feature type="binding site" evidence="2">
    <location>
        <position position="246"/>
    </location>
    <ligand>
        <name>Ca(2+)</name>
        <dbReference type="ChEBI" id="CHEBI:29108"/>
        <label>2</label>
    </ligand>
</feature>
<feature type="binding site" evidence="2">
    <location>
        <position position="247"/>
    </location>
    <ligand>
        <name>Ca(2+)</name>
        <dbReference type="ChEBI" id="CHEBI:29108"/>
        <label>2</label>
    </ligand>
</feature>
<feature type="binding site" evidence="2">
    <location>
        <position position="248"/>
    </location>
    <ligand>
        <name>Ca(2+)</name>
        <dbReference type="ChEBI" id="CHEBI:29108"/>
        <label>1</label>
    </ligand>
</feature>
<feature type="binding site" evidence="2">
    <location>
        <position position="248"/>
    </location>
    <ligand>
        <name>Ca(2+)</name>
        <dbReference type="ChEBI" id="CHEBI:29108"/>
        <label>2</label>
    </ligand>
</feature>
<feature type="binding site" evidence="2">
    <location>
        <position position="248"/>
    </location>
    <ligand>
        <name>Ca(2+)</name>
        <dbReference type="ChEBI" id="CHEBI:29108"/>
        <label>3</label>
    </ligand>
</feature>
<feature type="binding site" evidence="2">
    <location>
        <position position="251"/>
    </location>
    <ligand>
        <name>Ca(2+)</name>
        <dbReference type="ChEBI" id="CHEBI:29108"/>
        <label>3</label>
    </ligand>
</feature>
<feature type="binding site" evidence="2">
    <location>
        <position position="252"/>
    </location>
    <ligand>
        <name>Ca(2+)</name>
        <dbReference type="ChEBI" id="CHEBI:29108"/>
        <label>3</label>
    </ligand>
</feature>
<feature type="binding site" evidence="2">
    <location>
        <position position="254"/>
    </location>
    <ligand>
        <name>Ca(2+)</name>
        <dbReference type="ChEBI" id="CHEBI:29108"/>
        <label>1</label>
    </ligand>
</feature>
<feature type="binding site" evidence="2">
    <location>
        <position position="254"/>
    </location>
    <ligand>
        <name>Ca(2+)</name>
        <dbReference type="ChEBI" id="CHEBI:29108"/>
        <label>3</label>
    </ligand>
</feature>
<feature type="binding site" evidence="5">
    <location>
        <begin position="357"/>
        <end position="365"/>
    </location>
    <ligand>
        <name>ATP</name>
        <dbReference type="ChEBI" id="CHEBI:30616"/>
    </ligand>
</feature>
<feature type="binding site" evidence="5">
    <location>
        <position position="380"/>
    </location>
    <ligand>
        <name>ATP</name>
        <dbReference type="ChEBI" id="CHEBI:30616"/>
    </ligand>
</feature>
<feature type="modified residue" description="Phosphothreonine; by autocatalysis" evidence="1">
    <location>
        <position position="250"/>
    </location>
</feature>
<feature type="modified residue" description="Phosphoserine" evidence="3">
    <location>
        <position position="320"/>
    </location>
</feature>
<feature type="modified residue" description="Phosphoserine" evidence="3">
    <location>
        <position position="322"/>
    </location>
</feature>
<feature type="modified residue" description="Phosphoserine" evidence="17">
    <location>
        <position position="326"/>
    </location>
</feature>
<feature type="modified residue" description="Phosphoserine" evidence="17">
    <location>
        <position position="328"/>
    </location>
</feature>
<feature type="modified residue" description="Phosphoserine" evidence="17">
    <location>
        <position position="330"/>
    </location>
</feature>
<feature type="modified residue" description="Phosphothreonine" evidence="3">
    <location>
        <position position="332"/>
    </location>
</feature>
<feature type="modified residue" description="Phosphoserine" evidence="3">
    <location>
        <position position="373"/>
    </location>
</feature>
<feature type="modified residue" description="Phosphothreonine; by PDPK1" evidence="3">
    <location>
        <position position="514"/>
    </location>
</feature>
<feature type="modified residue" description="Phosphothreonine; by autocatalysis" evidence="1">
    <location>
        <position position="648"/>
    </location>
</feature>
<feature type="modified residue" description="Phosphothreonine" evidence="17">
    <location>
        <position position="655"/>
    </location>
</feature>
<feature type="modified residue" description="Phosphothreonine; by autocatalysis" evidence="3">
    <location>
        <position position="674"/>
    </location>
</feature>
<feature type="modified residue" description="Phosphotyrosine; by SYK" evidence="1">
    <location>
        <position position="675"/>
    </location>
</feature>
<feature type="modified residue" description="Phosphoserine" evidence="17">
    <location>
        <position position="687"/>
    </location>
</feature>
<feature type="strand" evidence="18">
    <location>
        <begin position="103"/>
        <end position="105"/>
    </location>
</feature>
<feature type="strand" evidence="18">
    <location>
        <begin position="108"/>
        <end position="110"/>
    </location>
</feature>
<feature type="strand" evidence="18">
    <location>
        <begin position="115"/>
        <end position="117"/>
    </location>
</feature>
<feature type="strand" evidence="18">
    <location>
        <begin position="125"/>
        <end position="127"/>
    </location>
</feature>
<feature type="strand" evidence="18">
    <location>
        <begin position="129"/>
        <end position="131"/>
    </location>
</feature>
<feature type="turn" evidence="18">
    <location>
        <begin position="132"/>
        <end position="134"/>
    </location>
</feature>
<feature type="turn" evidence="18">
    <location>
        <begin position="140"/>
        <end position="145"/>
    </location>
</feature>
<organism>
    <name type="scientific">Rattus norvegicus</name>
    <name type="common">Rat</name>
    <dbReference type="NCBI Taxonomy" id="10116"/>
    <lineage>
        <taxon>Eukaryota</taxon>
        <taxon>Metazoa</taxon>
        <taxon>Chordata</taxon>
        <taxon>Craniata</taxon>
        <taxon>Vertebrata</taxon>
        <taxon>Euteleostomi</taxon>
        <taxon>Mammalia</taxon>
        <taxon>Eutheria</taxon>
        <taxon>Euarchontoglires</taxon>
        <taxon>Glires</taxon>
        <taxon>Rodentia</taxon>
        <taxon>Myomorpha</taxon>
        <taxon>Muroidea</taxon>
        <taxon>Muridae</taxon>
        <taxon>Murinae</taxon>
        <taxon>Rattus</taxon>
    </lineage>
</organism>
<accession>P63319</accession>
<accession>P05697</accession>
<accession>Q5FWS3</accession>
<dbReference type="EC" id="2.7.11.13" evidence="2"/>
<dbReference type="EMBL" id="X07287">
    <property type="protein sequence ID" value="CAA30267.1"/>
    <property type="molecule type" value="mRNA"/>
</dbReference>
<dbReference type="EMBL" id="M13707">
    <property type="protein sequence ID" value="AAA41874.1"/>
    <property type="molecule type" value="mRNA"/>
</dbReference>
<dbReference type="EMBL" id="BC089226">
    <property type="protein sequence ID" value="AAH89226.1"/>
    <property type="molecule type" value="mRNA"/>
</dbReference>
<dbReference type="EMBL" id="M55417">
    <property type="protein sequence ID" value="AAA41873.1"/>
    <property type="molecule type" value="Genomic_DNA"/>
</dbReference>
<dbReference type="PIR" id="A05105">
    <property type="entry name" value="KIRTGC"/>
</dbReference>
<dbReference type="RefSeq" id="NP_036760.1">
    <property type="nucleotide sequence ID" value="NM_012628.2"/>
</dbReference>
<dbReference type="PDB" id="1TBN">
    <property type="method" value="NMR"/>
    <property type="chains" value="A=91-172"/>
</dbReference>
<dbReference type="PDB" id="1TBO">
    <property type="method" value="NMR"/>
    <property type="chains" value="A=91-172"/>
</dbReference>
<dbReference type="PDBsum" id="1TBN"/>
<dbReference type="PDBsum" id="1TBO"/>
<dbReference type="SMR" id="P63319"/>
<dbReference type="BioGRID" id="246813">
    <property type="interactions" value="24"/>
</dbReference>
<dbReference type="FunCoup" id="P63319">
    <property type="interactions" value="1726"/>
</dbReference>
<dbReference type="IntAct" id="P63319">
    <property type="interactions" value="2"/>
</dbReference>
<dbReference type="MINT" id="P63319"/>
<dbReference type="STRING" id="10116.ENSRNOP00000071203"/>
<dbReference type="BindingDB" id="P63319"/>
<dbReference type="ChEMBL" id="CHEMBL3604"/>
<dbReference type="DrugCentral" id="P63319"/>
<dbReference type="GlyGen" id="P63319">
    <property type="glycosylation" value="7 sites, 1 O-linked glycan (6 sites)"/>
</dbReference>
<dbReference type="iPTMnet" id="P63319"/>
<dbReference type="PhosphoSitePlus" id="P63319"/>
<dbReference type="PaxDb" id="10116-ENSRNOP00000019825"/>
<dbReference type="Ensembl" id="ENSRNOT00000080032.2">
    <property type="protein sequence ID" value="ENSRNOP00000071203.1"/>
    <property type="gene ID" value="ENSRNOG00000054371.2"/>
</dbReference>
<dbReference type="GeneID" id="24681"/>
<dbReference type="KEGG" id="rno:24681"/>
<dbReference type="UCSC" id="RGD:3397">
    <property type="organism name" value="rat"/>
</dbReference>
<dbReference type="AGR" id="RGD:3397"/>
<dbReference type="CTD" id="5582"/>
<dbReference type="RGD" id="3397">
    <property type="gene designation" value="Prkcg"/>
</dbReference>
<dbReference type="eggNOG" id="KOG0696">
    <property type="taxonomic scope" value="Eukaryota"/>
</dbReference>
<dbReference type="GeneTree" id="ENSGT00940000161219"/>
<dbReference type="HOGENOM" id="CLU_000288_54_2_1"/>
<dbReference type="InParanoid" id="P63319"/>
<dbReference type="OMA" id="DADNCGL"/>
<dbReference type="OrthoDB" id="63267at2759"/>
<dbReference type="PhylomeDB" id="P63319"/>
<dbReference type="TreeFam" id="TF351133"/>
<dbReference type="Reactome" id="R-RNO-111933">
    <property type="pathway name" value="Calmodulin induced events"/>
</dbReference>
<dbReference type="Reactome" id="R-RNO-114516">
    <property type="pathway name" value="Disinhibition of SNARE formation"/>
</dbReference>
<dbReference type="Reactome" id="R-RNO-416993">
    <property type="pathway name" value="Trafficking of GluR2-containing AMPA receptors"/>
</dbReference>
<dbReference type="Reactome" id="R-RNO-5099900">
    <property type="pathway name" value="WNT5A-dependent internalization of FZD4"/>
</dbReference>
<dbReference type="Reactome" id="R-RNO-76005">
    <property type="pathway name" value="Response to elevated platelet cytosolic Ca2+"/>
</dbReference>
<dbReference type="EvolutionaryTrace" id="P63319"/>
<dbReference type="PRO" id="PR:P63319"/>
<dbReference type="Proteomes" id="UP000002494">
    <property type="component" value="Chromosome 1"/>
</dbReference>
<dbReference type="Bgee" id="ENSRNOG00000054371">
    <property type="expression patterns" value="Expressed in frontal cortex and 19 other cell types or tissues"/>
</dbReference>
<dbReference type="GO" id="GO:0044305">
    <property type="term" value="C:calyx of Held"/>
    <property type="evidence" value="ECO:0000266"/>
    <property type="project" value="RGD"/>
</dbReference>
<dbReference type="GO" id="GO:0005911">
    <property type="term" value="C:cell-cell junction"/>
    <property type="evidence" value="ECO:0000266"/>
    <property type="project" value="RGD"/>
</dbReference>
<dbReference type="GO" id="GO:0005737">
    <property type="term" value="C:cytoplasm"/>
    <property type="evidence" value="ECO:0000266"/>
    <property type="project" value="RGD"/>
</dbReference>
<dbReference type="GO" id="GO:0005829">
    <property type="term" value="C:cytosol"/>
    <property type="evidence" value="ECO:0000314"/>
    <property type="project" value="UniProtKB"/>
</dbReference>
<dbReference type="GO" id="GO:0030425">
    <property type="term" value="C:dendrite"/>
    <property type="evidence" value="ECO:0000314"/>
    <property type="project" value="UniProtKB"/>
</dbReference>
<dbReference type="GO" id="GO:0005634">
    <property type="term" value="C:nucleus"/>
    <property type="evidence" value="ECO:0000266"/>
    <property type="project" value="RGD"/>
</dbReference>
<dbReference type="GO" id="GO:0048471">
    <property type="term" value="C:perinuclear region of cytoplasm"/>
    <property type="evidence" value="ECO:0000314"/>
    <property type="project" value="UniProtKB"/>
</dbReference>
<dbReference type="GO" id="GO:0005886">
    <property type="term" value="C:plasma membrane"/>
    <property type="evidence" value="ECO:0000314"/>
    <property type="project" value="UniProtKB"/>
</dbReference>
<dbReference type="GO" id="GO:0099524">
    <property type="term" value="C:postsynaptic cytosol"/>
    <property type="evidence" value="ECO:0000314"/>
    <property type="project" value="SynGO"/>
</dbReference>
<dbReference type="GO" id="GO:0014069">
    <property type="term" value="C:postsynaptic density"/>
    <property type="evidence" value="ECO:0000266"/>
    <property type="project" value="RGD"/>
</dbReference>
<dbReference type="GO" id="GO:0099523">
    <property type="term" value="C:presynaptic cytosol"/>
    <property type="evidence" value="ECO:0000266"/>
    <property type="project" value="RGD"/>
</dbReference>
<dbReference type="GO" id="GO:0097060">
    <property type="term" value="C:synaptic membrane"/>
    <property type="evidence" value="ECO:0000314"/>
    <property type="project" value="RGD"/>
</dbReference>
<dbReference type="GO" id="GO:0005524">
    <property type="term" value="F:ATP binding"/>
    <property type="evidence" value="ECO:0007669"/>
    <property type="project" value="UniProtKB-KW"/>
</dbReference>
<dbReference type="GO" id="GO:0004698">
    <property type="term" value="F:calcium,diacylglycerol-dependent serine/threonine kinase activity"/>
    <property type="evidence" value="ECO:0000314"/>
    <property type="project" value="RGD"/>
</dbReference>
<dbReference type="GO" id="GO:0004672">
    <property type="term" value="F:protein kinase activity"/>
    <property type="evidence" value="ECO:0000266"/>
    <property type="project" value="RGD"/>
</dbReference>
<dbReference type="GO" id="GO:0106310">
    <property type="term" value="F:protein serine kinase activity"/>
    <property type="evidence" value="ECO:0007669"/>
    <property type="project" value="RHEA"/>
</dbReference>
<dbReference type="GO" id="GO:0004674">
    <property type="term" value="F:protein serine/threonine kinase activity"/>
    <property type="evidence" value="ECO:0000318"/>
    <property type="project" value="GO_Central"/>
</dbReference>
<dbReference type="GO" id="GO:0004712">
    <property type="term" value="F:protein serine/threonine/tyrosine kinase activity"/>
    <property type="evidence" value="ECO:0000266"/>
    <property type="project" value="RGD"/>
</dbReference>
<dbReference type="GO" id="GO:0008270">
    <property type="term" value="F:zinc ion binding"/>
    <property type="evidence" value="ECO:0007669"/>
    <property type="project" value="UniProtKB-KW"/>
</dbReference>
<dbReference type="GO" id="GO:0007268">
    <property type="term" value="P:chemical synaptic transmission"/>
    <property type="evidence" value="ECO:0000266"/>
    <property type="project" value="RGD"/>
</dbReference>
<dbReference type="GO" id="GO:0007635">
    <property type="term" value="P:chemosensory behavior"/>
    <property type="evidence" value="ECO:0000266"/>
    <property type="project" value="RGD"/>
</dbReference>
<dbReference type="GO" id="GO:0060384">
    <property type="term" value="P:innervation"/>
    <property type="evidence" value="ECO:0000266"/>
    <property type="project" value="RGD"/>
</dbReference>
<dbReference type="GO" id="GO:0035556">
    <property type="term" value="P:intracellular signal transduction"/>
    <property type="evidence" value="ECO:0000318"/>
    <property type="project" value="GO_Central"/>
</dbReference>
<dbReference type="GO" id="GO:0007611">
    <property type="term" value="P:learning or memory"/>
    <property type="evidence" value="ECO:0000270"/>
    <property type="project" value="RGD"/>
</dbReference>
<dbReference type="GO" id="GO:0060291">
    <property type="term" value="P:long-term synaptic potentiation"/>
    <property type="evidence" value="ECO:0000314"/>
    <property type="project" value="RGD"/>
</dbReference>
<dbReference type="GO" id="GO:0043524">
    <property type="term" value="P:negative regulation of neuron apoptotic process"/>
    <property type="evidence" value="ECO:0000315"/>
    <property type="project" value="UniProtKB"/>
</dbReference>
<dbReference type="GO" id="GO:1901799">
    <property type="term" value="P:negative regulation of proteasomal protein catabolic process"/>
    <property type="evidence" value="ECO:0000250"/>
    <property type="project" value="UniProtKB"/>
</dbReference>
<dbReference type="GO" id="GO:0042177">
    <property type="term" value="P:negative regulation of protein catabolic process"/>
    <property type="evidence" value="ECO:0000266"/>
    <property type="project" value="RGD"/>
</dbReference>
<dbReference type="GO" id="GO:0031397">
    <property type="term" value="P:negative regulation of protein ubiquitination"/>
    <property type="evidence" value="ECO:0000250"/>
    <property type="project" value="UniProtKB"/>
</dbReference>
<dbReference type="GO" id="GO:0007200">
    <property type="term" value="P:phospholipase C-activating G protein-coupled receptor signaling pathway"/>
    <property type="evidence" value="ECO:0000266"/>
    <property type="project" value="RGD"/>
</dbReference>
<dbReference type="GO" id="GO:0032425">
    <property type="term" value="P:positive regulation of mismatch repair"/>
    <property type="evidence" value="ECO:0000266"/>
    <property type="project" value="RGD"/>
</dbReference>
<dbReference type="GO" id="GO:0099171">
    <property type="term" value="P:presynaptic modulation of chemical synaptic transmission"/>
    <property type="evidence" value="ECO:0000266"/>
    <property type="project" value="RGD"/>
</dbReference>
<dbReference type="GO" id="GO:0042752">
    <property type="term" value="P:regulation of circadian rhythm"/>
    <property type="evidence" value="ECO:0000250"/>
    <property type="project" value="UniProtKB"/>
</dbReference>
<dbReference type="GO" id="GO:0050764">
    <property type="term" value="P:regulation of phagocytosis"/>
    <property type="evidence" value="ECO:0000266"/>
    <property type="project" value="RGD"/>
</dbReference>
<dbReference type="GO" id="GO:0032095">
    <property type="term" value="P:regulation of response to food"/>
    <property type="evidence" value="ECO:0000250"/>
    <property type="project" value="UniProtKB"/>
</dbReference>
<dbReference type="GO" id="GO:2000300">
    <property type="term" value="P:regulation of synaptic vesicle exocytosis"/>
    <property type="evidence" value="ECO:0000266"/>
    <property type="project" value="RGD"/>
</dbReference>
<dbReference type="GO" id="GO:1990776">
    <property type="term" value="P:response to angiotensin"/>
    <property type="evidence" value="ECO:0000314"/>
    <property type="project" value="RGD"/>
</dbReference>
<dbReference type="GO" id="GO:0043278">
    <property type="term" value="P:response to morphine"/>
    <property type="evidence" value="ECO:0000250"/>
    <property type="project" value="UniProtKB"/>
</dbReference>
<dbReference type="GO" id="GO:0048265">
    <property type="term" value="P:response to pain"/>
    <property type="evidence" value="ECO:0000250"/>
    <property type="project" value="UniProtKB"/>
</dbReference>
<dbReference type="GO" id="GO:1990911">
    <property type="term" value="P:response to psychosocial stress"/>
    <property type="evidence" value="ECO:0000314"/>
    <property type="project" value="UniProtKB"/>
</dbReference>
<dbReference type="GO" id="GO:0009636">
    <property type="term" value="P:response to toxic substance"/>
    <property type="evidence" value="ECO:0000270"/>
    <property type="project" value="RGD"/>
</dbReference>
<dbReference type="GO" id="GO:0048511">
    <property type="term" value="P:rhythmic process"/>
    <property type="evidence" value="ECO:0007669"/>
    <property type="project" value="UniProtKB-KW"/>
</dbReference>
<dbReference type="CDD" id="cd20833">
    <property type="entry name" value="C1_cPKC_rpt1"/>
    <property type="match status" value="1"/>
</dbReference>
<dbReference type="CDD" id="cd20836">
    <property type="entry name" value="C1_cPKC_rpt2"/>
    <property type="match status" value="1"/>
</dbReference>
<dbReference type="CDD" id="cd04026">
    <property type="entry name" value="C2_PKC_alpha_gamma"/>
    <property type="match status" value="1"/>
</dbReference>
<dbReference type="CDD" id="cd05587">
    <property type="entry name" value="STKc_cPKC"/>
    <property type="match status" value="1"/>
</dbReference>
<dbReference type="FunFam" id="2.60.40.150:FF:000012">
    <property type="entry name" value="Kinase C alpha type"/>
    <property type="match status" value="1"/>
</dbReference>
<dbReference type="FunFam" id="1.10.510.10:FF:000023">
    <property type="entry name" value="Protein kinase C"/>
    <property type="match status" value="1"/>
</dbReference>
<dbReference type="FunFam" id="3.30.200.20:FF:000080">
    <property type="entry name" value="Protein kinase C"/>
    <property type="match status" value="1"/>
</dbReference>
<dbReference type="FunFam" id="3.30.200.20:FF:000103">
    <property type="entry name" value="Protein kinase C"/>
    <property type="match status" value="1"/>
</dbReference>
<dbReference type="FunFam" id="3.30.60.20:FF:000006">
    <property type="entry name" value="Protein kinase C"/>
    <property type="match status" value="1"/>
</dbReference>
<dbReference type="FunFam" id="3.30.60.20:FF:000011">
    <property type="entry name" value="Protein kinase C"/>
    <property type="match status" value="1"/>
</dbReference>
<dbReference type="Gene3D" id="3.30.60.20">
    <property type="match status" value="2"/>
</dbReference>
<dbReference type="Gene3D" id="2.60.40.150">
    <property type="entry name" value="C2 domain"/>
    <property type="match status" value="1"/>
</dbReference>
<dbReference type="Gene3D" id="3.30.200.20">
    <property type="entry name" value="Phosphorylase Kinase, domain 1"/>
    <property type="match status" value="2"/>
</dbReference>
<dbReference type="Gene3D" id="1.10.510.10">
    <property type="entry name" value="Transferase(Phosphotransferase) domain 1"/>
    <property type="match status" value="1"/>
</dbReference>
<dbReference type="InterPro" id="IPR000961">
    <property type="entry name" value="AGC-kinase_C"/>
</dbReference>
<dbReference type="InterPro" id="IPR046349">
    <property type="entry name" value="C1-like_sf"/>
</dbReference>
<dbReference type="InterPro" id="IPR000008">
    <property type="entry name" value="C2_dom"/>
</dbReference>
<dbReference type="InterPro" id="IPR035892">
    <property type="entry name" value="C2_domain_sf"/>
</dbReference>
<dbReference type="InterPro" id="IPR020454">
    <property type="entry name" value="DAG/PE-bd"/>
</dbReference>
<dbReference type="InterPro" id="IPR011009">
    <property type="entry name" value="Kinase-like_dom_sf"/>
</dbReference>
<dbReference type="InterPro" id="IPR002219">
    <property type="entry name" value="PE/DAG-bd"/>
</dbReference>
<dbReference type="InterPro" id="IPR017892">
    <property type="entry name" value="Pkinase_C"/>
</dbReference>
<dbReference type="InterPro" id="IPR000719">
    <property type="entry name" value="Prot_kinase_dom"/>
</dbReference>
<dbReference type="InterPro" id="IPR017441">
    <property type="entry name" value="Protein_kinase_ATP_BS"/>
</dbReference>
<dbReference type="InterPro" id="IPR014375">
    <property type="entry name" value="Protein_kinase_C_a/b/g"/>
</dbReference>
<dbReference type="InterPro" id="IPR008271">
    <property type="entry name" value="Ser/Thr_kinase_AS"/>
</dbReference>
<dbReference type="PANTHER" id="PTHR24351">
    <property type="entry name" value="RIBOSOMAL PROTEIN S6 KINASE"/>
    <property type="match status" value="1"/>
</dbReference>
<dbReference type="Pfam" id="PF00130">
    <property type="entry name" value="C1_1"/>
    <property type="match status" value="2"/>
</dbReference>
<dbReference type="Pfam" id="PF00168">
    <property type="entry name" value="C2"/>
    <property type="match status" value="1"/>
</dbReference>
<dbReference type="Pfam" id="PF00069">
    <property type="entry name" value="Pkinase"/>
    <property type="match status" value="1"/>
</dbReference>
<dbReference type="Pfam" id="PF00433">
    <property type="entry name" value="Pkinase_C"/>
    <property type="match status" value="1"/>
</dbReference>
<dbReference type="PIRSF" id="PIRSF000550">
    <property type="entry name" value="PKC_alpha"/>
    <property type="match status" value="1"/>
</dbReference>
<dbReference type="PRINTS" id="PR00360">
    <property type="entry name" value="C2DOMAIN"/>
</dbReference>
<dbReference type="PRINTS" id="PR00008">
    <property type="entry name" value="DAGPEDOMAIN"/>
</dbReference>
<dbReference type="SMART" id="SM00109">
    <property type="entry name" value="C1"/>
    <property type="match status" value="2"/>
</dbReference>
<dbReference type="SMART" id="SM00239">
    <property type="entry name" value="C2"/>
    <property type="match status" value="1"/>
</dbReference>
<dbReference type="SMART" id="SM00133">
    <property type="entry name" value="S_TK_X"/>
    <property type="match status" value="1"/>
</dbReference>
<dbReference type="SMART" id="SM00220">
    <property type="entry name" value="S_TKc"/>
    <property type="match status" value="1"/>
</dbReference>
<dbReference type="SUPFAM" id="SSF49562">
    <property type="entry name" value="C2 domain (Calcium/lipid-binding domain, CaLB)"/>
    <property type="match status" value="1"/>
</dbReference>
<dbReference type="SUPFAM" id="SSF57889">
    <property type="entry name" value="Cysteine-rich domain"/>
    <property type="match status" value="2"/>
</dbReference>
<dbReference type="SUPFAM" id="SSF56112">
    <property type="entry name" value="Protein kinase-like (PK-like)"/>
    <property type="match status" value="1"/>
</dbReference>
<dbReference type="PROSITE" id="PS51285">
    <property type="entry name" value="AGC_KINASE_CTER"/>
    <property type="match status" value="1"/>
</dbReference>
<dbReference type="PROSITE" id="PS50004">
    <property type="entry name" value="C2"/>
    <property type="match status" value="1"/>
</dbReference>
<dbReference type="PROSITE" id="PS00107">
    <property type="entry name" value="PROTEIN_KINASE_ATP"/>
    <property type="match status" value="1"/>
</dbReference>
<dbReference type="PROSITE" id="PS50011">
    <property type="entry name" value="PROTEIN_KINASE_DOM"/>
    <property type="match status" value="1"/>
</dbReference>
<dbReference type="PROSITE" id="PS00108">
    <property type="entry name" value="PROTEIN_KINASE_ST"/>
    <property type="match status" value="1"/>
</dbReference>
<dbReference type="PROSITE" id="PS00479">
    <property type="entry name" value="ZF_DAG_PE_1"/>
    <property type="match status" value="2"/>
</dbReference>
<dbReference type="PROSITE" id="PS50081">
    <property type="entry name" value="ZF_DAG_PE_2"/>
    <property type="match status" value="2"/>
</dbReference>
<sequence length="697" mass="78358">MAGLGPGGGDSEGGPRPLFCRKGALRQKVVHEVKSHKFTARFFKQPTFCSHCTDFIWGIGKQGLQCQVCSFVVHRRCHEFVTFECPGAGKGPQTDDPRNKHKFRLHSYSSPTFCDHCGSLLYGLVHQGMKCSCCEMNVHRRCVRSVPSLCGVDHTERRGRLQLEIRAPTSDEIHITVGEARNLIPMDPNGLSDPYVKLKLIPDPRNLTKQKTKTVKATLNPVWNETFVFNLKPGDVERRLSVEVWDWDRTSRNDFMGAMSFGVSELLKAPVDGWYKLLNQEEGEYYNVPVADADNCSLLQKFEACNYPLELYERVRMGPSSSPIPSPSPSPTDSKRCFFGASPGRLHISDFSFLMVLGKGSFGKVMLAERRGSDELYAIKILKKDVIVQDDDVDCTLVEKRVLALGGRGPGGRPHFLTQLHSTFQTPDRLYFVMEYVTGGDLMYHIQQLGKFKEPHAAFYAAEIAIGLFFLHNQGIIYRDLKLDNVMLDAEGHIKITDFGMCKENVFPGSTTRTFCGTPDYIAPEIIAYQPYGKSVDWWSFGVLLYEMLAGQPPFDGEDEEELFQAIMEQTVTYPKSLSREAVAICKGFLTKHPGKRLGSGPDGEPTIRAHGFFRWIDWERLERLEIAPPFRPRPCGRSGENFDKFFTRAAPALTPPDRLVLASIDQADFQGFTYVNPDFVHPDARSPTSPVPVPVM</sequence>
<gene>
    <name type="primary">Prkcg</name>
    <name type="synonym">Pkcc</name>
    <name type="synonym">Pkcg</name>
    <name type="synonym">Prkcc</name>
</gene>
<keyword id="KW-0002">3D-structure</keyword>
<keyword id="KW-0067">ATP-binding</keyword>
<keyword id="KW-0090">Biological rhythms</keyword>
<keyword id="KW-0106">Calcium</keyword>
<keyword id="KW-1003">Cell membrane</keyword>
<keyword id="KW-0966">Cell projection</keyword>
<keyword id="KW-0963">Cytoplasm</keyword>
<keyword id="KW-0418">Kinase</keyword>
<keyword id="KW-0472">Membrane</keyword>
<keyword id="KW-0479">Metal-binding</keyword>
<keyword id="KW-0547">Nucleotide-binding</keyword>
<keyword id="KW-0597">Phosphoprotein</keyword>
<keyword id="KW-1185">Reference proteome</keyword>
<keyword id="KW-0677">Repeat</keyword>
<keyword id="KW-0723">Serine/threonine-protein kinase</keyword>
<keyword id="KW-0770">Synapse</keyword>
<keyword id="KW-0771">Synaptosome</keyword>
<keyword id="KW-0808">Transferase</keyword>
<keyword id="KW-0832">Ubl conjugation</keyword>
<keyword id="KW-0862">Zinc</keyword>
<keyword id="KW-0863">Zinc-finger</keyword>
<evidence type="ECO:0000250" key="1"/>
<evidence type="ECO:0000250" key="2">
    <source>
        <dbReference type="UniProtKB" id="P05129"/>
    </source>
</evidence>
<evidence type="ECO:0000250" key="3">
    <source>
        <dbReference type="UniProtKB" id="P63318"/>
    </source>
</evidence>
<evidence type="ECO:0000255" key="4">
    <source>
        <dbReference type="PROSITE-ProRule" id="PRU00041"/>
    </source>
</evidence>
<evidence type="ECO:0000255" key="5">
    <source>
        <dbReference type="PROSITE-ProRule" id="PRU00159"/>
    </source>
</evidence>
<evidence type="ECO:0000255" key="6">
    <source>
        <dbReference type="PROSITE-ProRule" id="PRU00226"/>
    </source>
</evidence>
<evidence type="ECO:0000255" key="7">
    <source>
        <dbReference type="PROSITE-ProRule" id="PRU00618"/>
    </source>
</evidence>
<evidence type="ECO:0000255" key="8">
    <source>
        <dbReference type="PROSITE-ProRule" id="PRU10027"/>
    </source>
</evidence>
<evidence type="ECO:0000269" key="9">
    <source>
    </source>
</evidence>
<evidence type="ECO:0000269" key="10">
    <source>
    </source>
</evidence>
<evidence type="ECO:0000269" key="11">
    <source>
    </source>
</evidence>
<evidence type="ECO:0000269" key="12">
    <source>
    </source>
</evidence>
<evidence type="ECO:0000269" key="13">
    <source>
    </source>
</evidence>
<evidence type="ECO:0000269" key="14">
    <source>
    </source>
</evidence>
<evidence type="ECO:0000269" key="15">
    <source>
    </source>
</evidence>
<evidence type="ECO:0000305" key="16"/>
<evidence type="ECO:0007744" key="17">
    <source>
    </source>
</evidence>
<evidence type="ECO:0007829" key="18">
    <source>
        <dbReference type="PDB" id="1TBN"/>
    </source>
</evidence>
<protein>
    <recommendedName>
        <fullName>Protein kinase C gamma type</fullName>
        <shortName>PKC-gamma</shortName>
        <ecNumber evidence="2">2.7.11.13</ecNumber>
    </recommendedName>
</protein>
<proteinExistence type="evidence at protein level"/>
<name>KPCG_RAT</name>